<sequence>MVLIRVLANLVILQLSYAQKSSELVIGGDECNINEHRFLVALYDSTTRNFLCGGVLIHPEWVITAKHCNKKSMVLYLGKHKQSVKFDDEQERFPKEKHFIRCNKPRTRWGEDIMLIRLNKPVNNSEHIAPLSLPSNPPIVGSVCRVMGWGSINKYIDVLPDEPRCANINLYNYTVCRGVFPRIPKKSKILCAGDLQGRLDSCHCDSGGPLICSEEFHGIVYRGPNPCAQPDKPALYTNIFDHLHWILSIMAGNATCYP</sequence>
<proteinExistence type="evidence at transcript level"/>
<feature type="signal peptide" evidence="1">
    <location>
        <begin position="1"/>
        <end position="18"/>
    </location>
</feature>
<feature type="propeptide" id="PRO_0000028377" evidence="1">
    <location>
        <begin position="19"/>
        <end position="24"/>
    </location>
</feature>
<feature type="chain" id="PRO_0000028378" description="Thrombin-like enzyme ancrod-2">
    <location>
        <begin position="25"/>
        <end position="258"/>
    </location>
</feature>
<feature type="domain" description="Peptidase S1" evidence="3">
    <location>
        <begin position="25"/>
        <end position="251"/>
    </location>
</feature>
<feature type="active site" description="Charge relay system" evidence="3">
    <location>
        <position position="67"/>
    </location>
</feature>
<feature type="active site" description="Charge relay system" evidence="3">
    <location>
        <position position="112"/>
    </location>
</feature>
<feature type="active site" description="Charge relay system" evidence="3">
    <location>
        <position position="206"/>
    </location>
</feature>
<feature type="glycosylation site" description="N-linked (GlcNAc...) asparagine" evidence="2">
    <location>
        <position position="123"/>
    </location>
</feature>
<feature type="glycosylation site" description="N-linked (GlcNAc...) asparagine" evidence="2">
    <location>
        <position position="172"/>
    </location>
</feature>
<feature type="glycosylation site" description="N-linked (GlcNAc...) asparagine" evidence="2">
    <location>
        <position position="253"/>
    </location>
</feature>
<feature type="disulfide bond" evidence="3">
    <location>
        <begin position="31"/>
        <end position="165"/>
    </location>
</feature>
<feature type="disulfide bond" evidence="3">
    <location>
        <begin position="52"/>
        <end position="68"/>
    </location>
</feature>
<feature type="disulfide bond" evidence="3">
    <location>
        <begin position="102"/>
        <end position="256"/>
    </location>
</feature>
<feature type="disulfide bond" evidence="3">
    <location>
        <begin position="144"/>
        <end position="212"/>
    </location>
</feature>
<feature type="disulfide bond" evidence="3">
    <location>
        <begin position="176"/>
        <end position="191"/>
    </location>
</feature>
<feature type="disulfide bond" evidence="3">
    <location>
        <begin position="202"/>
        <end position="227"/>
    </location>
</feature>
<organism>
    <name type="scientific">Calloselasma rhodostoma</name>
    <name type="common">Malayan pit viper</name>
    <name type="synonym">Agkistrodon rhodostoma</name>
    <dbReference type="NCBI Taxonomy" id="8717"/>
    <lineage>
        <taxon>Eukaryota</taxon>
        <taxon>Metazoa</taxon>
        <taxon>Chordata</taxon>
        <taxon>Craniata</taxon>
        <taxon>Vertebrata</taxon>
        <taxon>Euteleostomi</taxon>
        <taxon>Lepidosauria</taxon>
        <taxon>Squamata</taxon>
        <taxon>Bifurcata</taxon>
        <taxon>Unidentata</taxon>
        <taxon>Episquamata</taxon>
        <taxon>Toxicofera</taxon>
        <taxon>Serpentes</taxon>
        <taxon>Colubroidea</taxon>
        <taxon>Viperidae</taxon>
        <taxon>Crotalinae</taxon>
        <taxon>Calloselasma</taxon>
    </lineage>
</organism>
<accession>P47797</accession>
<comment type="function">
    <text>Thrombin-like snake venom serine protease. Cleaves fibrinogen (FGA) to split of fibrinopeptides AM, AO, and AY; the aberrant fibrinogen is then incapable of being cross-linked, forming easily dispersible clots.</text>
</comment>
<comment type="catalytic activity">
    <reaction>
        <text>Selective cleavage of Arg-|-Xaa bond in fibrinogen, to form fibrin, and release fibrinopeptide A. The specificity of further degradation of fibrinogen varies with species origin of the enzyme.</text>
        <dbReference type="EC" id="3.4.21.74"/>
    </reaction>
</comment>
<comment type="subunit">
    <text evidence="1">Monomer.</text>
</comment>
<comment type="subcellular location">
    <subcellularLocation>
        <location>Secreted</location>
    </subcellularLocation>
</comment>
<comment type="tissue specificity">
    <text>Expressed by the venom gland.</text>
</comment>
<comment type="similarity">
    <text evidence="3">Belongs to the peptidase S1 family. Snake venom subfamily.</text>
</comment>
<name>VSPF2_CALRH</name>
<evidence type="ECO:0000250" key="1"/>
<evidence type="ECO:0000255" key="2"/>
<evidence type="ECO:0000255" key="3">
    <source>
        <dbReference type="PROSITE-ProRule" id="PRU00274"/>
    </source>
</evidence>
<keyword id="KW-1204">Blood coagulation cascade activating toxin</keyword>
<keyword id="KW-1015">Disulfide bond</keyword>
<keyword id="KW-0325">Glycoprotein</keyword>
<keyword id="KW-1199">Hemostasis impairing toxin</keyword>
<keyword id="KW-0378">Hydrolase</keyword>
<keyword id="KW-0645">Protease</keyword>
<keyword id="KW-0964">Secreted</keyword>
<keyword id="KW-0720">Serine protease</keyword>
<keyword id="KW-0732">Signal</keyword>
<keyword id="KW-0800">Toxin</keyword>
<keyword id="KW-0865">Zymogen</keyword>
<reference key="1">
    <citation type="journal article" date="1993" name="Biochem. J.">
        <title>Molecular cloning and sequence analysis of the cDNA for ancrod, a thrombin-like enzyme from the venom of Calloselasma rhodostoma.</title>
        <authorList>
            <person name="Au L.-C."/>
            <person name="Lin S.-B."/>
            <person name="Chou J.-S."/>
            <person name="Teh G.-W."/>
            <person name="Chang K.-J."/>
            <person name="Shih C.-M."/>
        </authorList>
    </citation>
    <scope>NUCLEOTIDE SEQUENCE [MRNA]</scope>
    <source>
        <tissue>Venom gland</tissue>
    </source>
</reference>
<dbReference type="EC" id="3.4.21.74"/>
<dbReference type="EMBL" id="L07308">
    <property type="protein sequence ID" value="AAA49195.1"/>
    <property type="molecule type" value="mRNA"/>
</dbReference>
<dbReference type="PIR" id="S36783">
    <property type="entry name" value="S36783"/>
</dbReference>
<dbReference type="SMR" id="P47797"/>
<dbReference type="MEROPS" id="S01.178"/>
<dbReference type="GO" id="GO:0005576">
    <property type="term" value="C:extracellular region"/>
    <property type="evidence" value="ECO:0007669"/>
    <property type="project" value="UniProtKB-SubCell"/>
</dbReference>
<dbReference type="GO" id="GO:0030141">
    <property type="term" value="C:secretory granule"/>
    <property type="evidence" value="ECO:0007669"/>
    <property type="project" value="TreeGrafter"/>
</dbReference>
<dbReference type="GO" id="GO:0004252">
    <property type="term" value="F:serine-type endopeptidase activity"/>
    <property type="evidence" value="ECO:0007669"/>
    <property type="project" value="InterPro"/>
</dbReference>
<dbReference type="GO" id="GO:0090729">
    <property type="term" value="F:toxin activity"/>
    <property type="evidence" value="ECO:0007669"/>
    <property type="project" value="UniProtKB-KW"/>
</dbReference>
<dbReference type="GO" id="GO:0006508">
    <property type="term" value="P:proteolysis"/>
    <property type="evidence" value="ECO:0007669"/>
    <property type="project" value="UniProtKB-KW"/>
</dbReference>
<dbReference type="CDD" id="cd00190">
    <property type="entry name" value="Tryp_SPc"/>
    <property type="match status" value="1"/>
</dbReference>
<dbReference type="FunFam" id="2.40.10.10:FF:000010">
    <property type="entry name" value="Kallikrein related peptidase 11"/>
    <property type="match status" value="1"/>
</dbReference>
<dbReference type="Gene3D" id="2.40.10.10">
    <property type="entry name" value="Trypsin-like serine proteases"/>
    <property type="match status" value="2"/>
</dbReference>
<dbReference type="InterPro" id="IPR009003">
    <property type="entry name" value="Peptidase_S1_PA"/>
</dbReference>
<dbReference type="InterPro" id="IPR043504">
    <property type="entry name" value="Peptidase_S1_PA_chymotrypsin"/>
</dbReference>
<dbReference type="InterPro" id="IPR001314">
    <property type="entry name" value="Peptidase_S1A"/>
</dbReference>
<dbReference type="InterPro" id="IPR001254">
    <property type="entry name" value="Trypsin_dom"/>
</dbReference>
<dbReference type="PANTHER" id="PTHR24271:SF47">
    <property type="entry name" value="KALLIKREIN-1"/>
    <property type="match status" value="1"/>
</dbReference>
<dbReference type="PANTHER" id="PTHR24271">
    <property type="entry name" value="KALLIKREIN-RELATED"/>
    <property type="match status" value="1"/>
</dbReference>
<dbReference type="Pfam" id="PF00089">
    <property type="entry name" value="Trypsin"/>
    <property type="match status" value="1"/>
</dbReference>
<dbReference type="PRINTS" id="PR00722">
    <property type="entry name" value="CHYMOTRYPSIN"/>
</dbReference>
<dbReference type="SMART" id="SM00020">
    <property type="entry name" value="Tryp_SPc"/>
    <property type="match status" value="1"/>
</dbReference>
<dbReference type="SUPFAM" id="SSF50494">
    <property type="entry name" value="Trypsin-like serine proteases"/>
    <property type="match status" value="1"/>
</dbReference>
<dbReference type="PROSITE" id="PS50240">
    <property type="entry name" value="TRYPSIN_DOM"/>
    <property type="match status" value="1"/>
</dbReference>
<protein>
    <recommendedName>
        <fullName>Thrombin-like enzyme ancrod-2</fullName>
        <shortName>SVTLE</shortName>
        <ecNumber>3.4.21.74</ecNumber>
    </recommendedName>
    <alternativeName>
        <fullName>Fibrinogen-clotting enzyme</fullName>
    </alternativeName>
    <alternativeName>
        <fullName>Snake venom serine protease</fullName>
        <shortName>SVSP</shortName>
    </alternativeName>
    <alternativeName>
        <fullName>Venombin A</fullName>
    </alternativeName>
</protein>